<evidence type="ECO:0000255" key="1">
    <source>
        <dbReference type="HAMAP-Rule" id="MF_00016"/>
    </source>
</evidence>
<gene>
    <name evidence="1" type="primary">ruvB</name>
    <name type="ordered locus">PSEEN4092</name>
</gene>
<organism>
    <name type="scientific">Pseudomonas entomophila (strain L48)</name>
    <dbReference type="NCBI Taxonomy" id="384676"/>
    <lineage>
        <taxon>Bacteria</taxon>
        <taxon>Pseudomonadati</taxon>
        <taxon>Pseudomonadota</taxon>
        <taxon>Gammaproteobacteria</taxon>
        <taxon>Pseudomonadales</taxon>
        <taxon>Pseudomonadaceae</taxon>
        <taxon>Pseudomonas</taxon>
    </lineage>
</organism>
<reference key="1">
    <citation type="journal article" date="2006" name="Nat. Biotechnol.">
        <title>Complete genome sequence of the entomopathogenic and metabolically versatile soil bacterium Pseudomonas entomophila.</title>
        <authorList>
            <person name="Vodovar N."/>
            <person name="Vallenet D."/>
            <person name="Cruveiller S."/>
            <person name="Rouy Z."/>
            <person name="Barbe V."/>
            <person name="Acosta C."/>
            <person name="Cattolico L."/>
            <person name="Jubin C."/>
            <person name="Lajus A."/>
            <person name="Segurens B."/>
            <person name="Vacherie B."/>
            <person name="Wincker P."/>
            <person name="Weissenbach J."/>
            <person name="Lemaitre B."/>
            <person name="Medigue C."/>
            <person name="Boccard F."/>
        </authorList>
    </citation>
    <scope>NUCLEOTIDE SEQUENCE [LARGE SCALE GENOMIC DNA]</scope>
    <source>
        <strain>L48</strain>
    </source>
</reference>
<proteinExistence type="inferred from homology"/>
<protein>
    <recommendedName>
        <fullName evidence="1">Holliday junction branch migration complex subunit RuvB</fullName>
        <ecNumber evidence="1">3.6.4.-</ecNumber>
    </recommendedName>
</protein>
<sequence>MIETDRLIAASGRDREEVQDRAIRPLRLDEYIGQPVVREQMALFIQAARGRNESLDHTLIFGPPGLGKTTLANIIAQEMGVSVKSTSGPILERPGDLAAMLTNLEPHDVLFIDEIHRLSPVVEEVLYPAMEDFQLDIMIGEGPAARSIKLDLPPFTLVGATTRAGMLTNPLRDRFGIVQRLEFYSNKDLATIVSRSAGILGLPMDDKGAFEIARRARGTPRIANRLLRRVRDFAEVRGKGEITKAVADMALNLLDVDERGFDHSDRRLLLTMIEKFDGGPVGLDNIAAAIGEERHTIEDVLEPYLIQQGYIMRTPRGRVVTRHAYLHFGLNIPGRFCEGGEYAAQDDE</sequence>
<accession>Q1I6E9</accession>
<name>RUVB_PSEE4</name>
<dbReference type="EC" id="3.6.4.-" evidence="1"/>
<dbReference type="EMBL" id="CT573326">
    <property type="protein sequence ID" value="CAK16786.1"/>
    <property type="molecule type" value="Genomic_DNA"/>
</dbReference>
<dbReference type="RefSeq" id="WP_011535158.1">
    <property type="nucleotide sequence ID" value="NC_008027.1"/>
</dbReference>
<dbReference type="SMR" id="Q1I6E9"/>
<dbReference type="STRING" id="384676.PSEEN4092"/>
<dbReference type="GeneID" id="32807107"/>
<dbReference type="KEGG" id="pen:PSEEN4092"/>
<dbReference type="eggNOG" id="COG2255">
    <property type="taxonomic scope" value="Bacteria"/>
</dbReference>
<dbReference type="HOGENOM" id="CLU_055599_1_0_6"/>
<dbReference type="OrthoDB" id="9804478at2"/>
<dbReference type="Proteomes" id="UP000000658">
    <property type="component" value="Chromosome"/>
</dbReference>
<dbReference type="GO" id="GO:0005737">
    <property type="term" value="C:cytoplasm"/>
    <property type="evidence" value="ECO:0007669"/>
    <property type="project" value="UniProtKB-SubCell"/>
</dbReference>
<dbReference type="GO" id="GO:0048476">
    <property type="term" value="C:Holliday junction resolvase complex"/>
    <property type="evidence" value="ECO:0007669"/>
    <property type="project" value="UniProtKB-UniRule"/>
</dbReference>
<dbReference type="GO" id="GO:0005524">
    <property type="term" value="F:ATP binding"/>
    <property type="evidence" value="ECO:0007669"/>
    <property type="project" value="UniProtKB-UniRule"/>
</dbReference>
<dbReference type="GO" id="GO:0016887">
    <property type="term" value="F:ATP hydrolysis activity"/>
    <property type="evidence" value="ECO:0007669"/>
    <property type="project" value="InterPro"/>
</dbReference>
<dbReference type="GO" id="GO:0000400">
    <property type="term" value="F:four-way junction DNA binding"/>
    <property type="evidence" value="ECO:0007669"/>
    <property type="project" value="UniProtKB-UniRule"/>
</dbReference>
<dbReference type="GO" id="GO:0009378">
    <property type="term" value="F:four-way junction helicase activity"/>
    <property type="evidence" value="ECO:0007669"/>
    <property type="project" value="InterPro"/>
</dbReference>
<dbReference type="GO" id="GO:0006310">
    <property type="term" value="P:DNA recombination"/>
    <property type="evidence" value="ECO:0007669"/>
    <property type="project" value="UniProtKB-UniRule"/>
</dbReference>
<dbReference type="GO" id="GO:0006281">
    <property type="term" value="P:DNA repair"/>
    <property type="evidence" value="ECO:0007669"/>
    <property type="project" value="UniProtKB-UniRule"/>
</dbReference>
<dbReference type="CDD" id="cd00009">
    <property type="entry name" value="AAA"/>
    <property type="match status" value="1"/>
</dbReference>
<dbReference type="FunFam" id="1.10.10.10:FF:000086">
    <property type="entry name" value="Holliday junction ATP-dependent DNA helicase RuvB"/>
    <property type="match status" value="1"/>
</dbReference>
<dbReference type="FunFam" id="1.10.8.60:FF:000023">
    <property type="entry name" value="Holliday junction ATP-dependent DNA helicase RuvB"/>
    <property type="match status" value="1"/>
</dbReference>
<dbReference type="FunFam" id="3.40.50.300:FF:000073">
    <property type="entry name" value="Holliday junction ATP-dependent DNA helicase RuvB"/>
    <property type="match status" value="1"/>
</dbReference>
<dbReference type="Gene3D" id="1.10.8.60">
    <property type="match status" value="1"/>
</dbReference>
<dbReference type="Gene3D" id="3.40.50.300">
    <property type="entry name" value="P-loop containing nucleotide triphosphate hydrolases"/>
    <property type="match status" value="1"/>
</dbReference>
<dbReference type="Gene3D" id="1.10.10.10">
    <property type="entry name" value="Winged helix-like DNA-binding domain superfamily/Winged helix DNA-binding domain"/>
    <property type="match status" value="1"/>
</dbReference>
<dbReference type="HAMAP" id="MF_00016">
    <property type="entry name" value="DNA_HJ_migration_RuvB"/>
    <property type="match status" value="1"/>
</dbReference>
<dbReference type="InterPro" id="IPR003593">
    <property type="entry name" value="AAA+_ATPase"/>
</dbReference>
<dbReference type="InterPro" id="IPR041445">
    <property type="entry name" value="AAA_lid_4"/>
</dbReference>
<dbReference type="InterPro" id="IPR004605">
    <property type="entry name" value="DNA_helicase_Holl-junc_RuvB"/>
</dbReference>
<dbReference type="InterPro" id="IPR027417">
    <property type="entry name" value="P-loop_NTPase"/>
</dbReference>
<dbReference type="InterPro" id="IPR008824">
    <property type="entry name" value="RuvB-like_N"/>
</dbReference>
<dbReference type="InterPro" id="IPR008823">
    <property type="entry name" value="RuvB_C"/>
</dbReference>
<dbReference type="InterPro" id="IPR036388">
    <property type="entry name" value="WH-like_DNA-bd_sf"/>
</dbReference>
<dbReference type="InterPro" id="IPR036390">
    <property type="entry name" value="WH_DNA-bd_sf"/>
</dbReference>
<dbReference type="NCBIfam" id="NF000868">
    <property type="entry name" value="PRK00080.1"/>
    <property type="match status" value="1"/>
</dbReference>
<dbReference type="NCBIfam" id="TIGR00635">
    <property type="entry name" value="ruvB"/>
    <property type="match status" value="1"/>
</dbReference>
<dbReference type="PANTHER" id="PTHR42848">
    <property type="match status" value="1"/>
</dbReference>
<dbReference type="PANTHER" id="PTHR42848:SF1">
    <property type="entry name" value="HOLLIDAY JUNCTION BRANCH MIGRATION COMPLEX SUBUNIT RUVB"/>
    <property type="match status" value="1"/>
</dbReference>
<dbReference type="Pfam" id="PF17864">
    <property type="entry name" value="AAA_lid_4"/>
    <property type="match status" value="1"/>
</dbReference>
<dbReference type="Pfam" id="PF05491">
    <property type="entry name" value="RuvB_C"/>
    <property type="match status" value="1"/>
</dbReference>
<dbReference type="Pfam" id="PF05496">
    <property type="entry name" value="RuvB_N"/>
    <property type="match status" value="1"/>
</dbReference>
<dbReference type="SMART" id="SM00382">
    <property type="entry name" value="AAA"/>
    <property type="match status" value="1"/>
</dbReference>
<dbReference type="SUPFAM" id="SSF52540">
    <property type="entry name" value="P-loop containing nucleoside triphosphate hydrolases"/>
    <property type="match status" value="1"/>
</dbReference>
<dbReference type="SUPFAM" id="SSF46785">
    <property type="entry name" value="Winged helix' DNA-binding domain"/>
    <property type="match status" value="1"/>
</dbReference>
<comment type="function">
    <text evidence="1">The RuvA-RuvB-RuvC complex processes Holliday junction (HJ) DNA during genetic recombination and DNA repair, while the RuvA-RuvB complex plays an important role in the rescue of blocked DNA replication forks via replication fork reversal (RFR). RuvA specifically binds to HJ cruciform DNA, conferring on it an open structure. The RuvB hexamer acts as an ATP-dependent pump, pulling dsDNA into and through the RuvAB complex. RuvB forms 2 homohexamers on either side of HJ DNA bound by 1 or 2 RuvA tetramers; 4 subunits per hexamer contact DNA at a time. Coordinated motions by a converter formed by DNA-disengaged RuvB subunits stimulates ATP hydrolysis and nucleotide exchange. Immobilization of the converter enables RuvB to convert the ATP-contained energy into a lever motion, pulling 2 nucleotides of DNA out of the RuvA tetramer per ATP hydrolyzed, thus driving DNA branch migration. The RuvB motors rotate together with the DNA substrate, which together with the progressing nucleotide cycle form the mechanistic basis for DNA recombination by continuous HJ branch migration. Branch migration allows RuvC to scan DNA until it finds its consensus sequence, where it cleaves and resolves cruciform DNA.</text>
</comment>
<comment type="catalytic activity">
    <reaction evidence="1">
        <text>ATP + H2O = ADP + phosphate + H(+)</text>
        <dbReference type="Rhea" id="RHEA:13065"/>
        <dbReference type="ChEBI" id="CHEBI:15377"/>
        <dbReference type="ChEBI" id="CHEBI:15378"/>
        <dbReference type="ChEBI" id="CHEBI:30616"/>
        <dbReference type="ChEBI" id="CHEBI:43474"/>
        <dbReference type="ChEBI" id="CHEBI:456216"/>
    </reaction>
</comment>
<comment type="subunit">
    <text evidence="1">Homohexamer. Forms an RuvA(8)-RuvB(12)-Holliday junction (HJ) complex. HJ DNA is sandwiched between 2 RuvA tetramers; dsDNA enters through RuvA and exits via RuvB. An RuvB hexamer assembles on each DNA strand where it exits the tetramer. Each RuvB hexamer is contacted by two RuvA subunits (via domain III) on 2 adjacent RuvB subunits; this complex drives branch migration. In the full resolvosome a probable DNA-RuvA(4)-RuvB(12)-RuvC(2) complex forms which resolves the HJ.</text>
</comment>
<comment type="subcellular location">
    <subcellularLocation>
        <location evidence="1">Cytoplasm</location>
    </subcellularLocation>
</comment>
<comment type="domain">
    <text evidence="1">Has 3 domains, the large (RuvB-L) and small ATPase (RuvB-S) domains and the C-terminal head (RuvB-H) domain. The head domain binds DNA, while the ATPase domains jointly bind ATP, ADP or are empty depending on the state of the subunit in the translocation cycle. During a single DNA translocation step the structure of each domain remains the same, but their relative positions change.</text>
</comment>
<comment type="similarity">
    <text evidence="1">Belongs to the RuvB family.</text>
</comment>
<feature type="chain" id="PRO_1000001448" description="Holliday junction branch migration complex subunit RuvB">
    <location>
        <begin position="1"/>
        <end position="348"/>
    </location>
</feature>
<feature type="region of interest" description="Large ATPase domain (RuvB-L)" evidence="1">
    <location>
        <begin position="4"/>
        <end position="184"/>
    </location>
</feature>
<feature type="region of interest" description="Small ATPAse domain (RuvB-S)" evidence="1">
    <location>
        <begin position="185"/>
        <end position="255"/>
    </location>
</feature>
<feature type="region of interest" description="Head domain (RuvB-H)" evidence="1">
    <location>
        <begin position="258"/>
        <end position="348"/>
    </location>
</feature>
<feature type="binding site" evidence="1">
    <location>
        <position position="23"/>
    </location>
    <ligand>
        <name>ATP</name>
        <dbReference type="ChEBI" id="CHEBI:30616"/>
    </ligand>
</feature>
<feature type="binding site" evidence="1">
    <location>
        <position position="24"/>
    </location>
    <ligand>
        <name>ATP</name>
        <dbReference type="ChEBI" id="CHEBI:30616"/>
    </ligand>
</feature>
<feature type="binding site" evidence="1">
    <location>
        <position position="65"/>
    </location>
    <ligand>
        <name>ATP</name>
        <dbReference type="ChEBI" id="CHEBI:30616"/>
    </ligand>
</feature>
<feature type="binding site" evidence="1">
    <location>
        <position position="68"/>
    </location>
    <ligand>
        <name>ATP</name>
        <dbReference type="ChEBI" id="CHEBI:30616"/>
    </ligand>
</feature>
<feature type="binding site" evidence="1">
    <location>
        <position position="69"/>
    </location>
    <ligand>
        <name>ATP</name>
        <dbReference type="ChEBI" id="CHEBI:30616"/>
    </ligand>
</feature>
<feature type="binding site" evidence="1">
    <location>
        <position position="69"/>
    </location>
    <ligand>
        <name>Mg(2+)</name>
        <dbReference type="ChEBI" id="CHEBI:18420"/>
    </ligand>
</feature>
<feature type="binding site" evidence="1">
    <location>
        <position position="70"/>
    </location>
    <ligand>
        <name>ATP</name>
        <dbReference type="ChEBI" id="CHEBI:30616"/>
    </ligand>
</feature>
<feature type="binding site" evidence="1">
    <location>
        <begin position="131"/>
        <end position="133"/>
    </location>
    <ligand>
        <name>ATP</name>
        <dbReference type="ChEBI" id="CHEBI:30616"/>
    </ligand>
</feature>
<feature type="binding site" evidence="1">
    <location>
        <position position="174"/>
    </location>
    <ligand>
        <name>ATP</name>
        <dbReference type="ChEBI" id="CHEBI:30616"/>
    </ligand>
</feature>
<feature type="binding site" evidence="1">
    <location>
        <position position="184"/>
    </location>
    <ligand>
        <name>ATP</name>
        <dbReference type="ChEBI" id="CHEBI:30616"/>
    </ligand>
</feature>
<feature type="binding site" evidence="1">
    <location>
        <position position="221"/>
    </location>
    <ligand>
        <name>ATP</name>
        <dbReference type="ChEBI" id="CHEBI:30616"/>
    </ligand>
</feature>
<feature type="binding site" evidence="1">
    <location>
        <position position="294"/>
    </location>
    <ligand>
        <name>DNA</name>
        <dbReference type="ChEBI" id="CHEBI:16991"/>
    </ligand>
</feature>
<feature type="binding site" evidence="1">
    <location>
        <position position="313"/>
    </location>
    <ligand>
        <name>DNA</name>
        <dbReference type="ChEBI" id="CHEBI:16991"/>
    </ligand>
</feature>
<feature type="binding site" evidence="1">
    <location>
        <position position="318"/>
    </location>
    <ligand>
        <name>DNA</name>
        <dbReference type="ChEBI" id="CHEBI:16991"/>
    </ligand>
</feature>
<keyword id="KW-0067">ATP-binding</keyword>
<keyword id="KW-0963">Cytoplasm</keyword>
<keyword id="KW-0227">DNA damage</keyword>
<keyword id="KW-0233">DNA recombination</keyword>
<keyword id="KW-0234">DNA repair</keyword>
<keyword id="KW-0238">DNA-binding</keyword>
<keyword id="KW-0378">Hydrolase</keyword>
<keyword id="KW-0547">Nucleotide-binding</keyword>